<feature type="chain" id="PRO_1000124701" description="3-phosphoshikimate 1-carboxyvinyltransferase">
    <location>
        <begin position="1"/>
        <end position="420"/>
    </location>
</feature>
<feature type="active site" description="Proton acceptor" evidence="1">
    <location>
        <position position="297"/>
    </location>
</feature>
<feature type="binding site" evidence="1">
    <location>
        <position position="26"/>
    </location>
    <ligand>
        <name>3-phosphoshikimate</name>
        <dbReference type="ChEBI" id="CHEBI:145989"/>
    </ligand>
</feature>
<feature type="binding site" evidence="1">
    <location>
        <position position="26"/>
    </location>
    <ligand>
        <name>phosphoenolpyruvate</name>
        <dbReference type="ChEBI" id="CHEBI:58702"/>
    </ligand>
</feature>
<feature type="binding site" evidence="1">
    <location>
        <position position="27"/>
    </location>
    <ligand>
        <name>3-phosphoshikimate</name>
        <dbReference type="ChEBI" id="CHEBI:145989"/>
    </ligand>
</feature>
<feature type="binding site" evidence="1">
    <location>
        <position position="31"/>
    </location>
    <ligand>
        <name>3-phosphoshikimate</name>
        <dbReference type="ChEBI" id="CHEBI:145989"/>
    </ligand>
</feature>
<feature type="binding site" evidence="1">
    <location>
        <position position="97"/>
    </location>
    <ligand>
        <name>phosphoenolpyruvate</name>
        <dbReference type="ChEBI" id="CHEBI:58702"/>
    </ligand>
</feature>
<feature type="binding site" evidence="1">
    <location>
        <position position="125"/>
    </location>
    <ligand>
        <name>phosphoenolpyruvate</name>
        <dbReference type="ChEBI" id="CHEBI:58702"/>
    </ligand>
</feature>
<feature type="binding site" evidence="1">
    <location>
        <position position="170"/>
    </location>
    <ligand>
        <name>3-phosphoshikimate</name>
        <dbReference type="ChEBI" id="CHEBI:145989"/>
    </ligand>
</feature>
<feature type="binding site" evidence="1">
    <location>
        <position position="171"/>
    </location>
    <ligand>
        <name>3-phosphoshikimate</name>
        <dbReference type="ChEBI" id="CHEBI:145989"/>
    </ligand>
</feature>
<feature type="binding site" evidence="1">
    <location>
        <position position="172"/>
    </location>
    <ligand>
        <name>3-phosphoshikimate</name>
        <dbReference type="ChEBI" id="CHEBI:145989"/>
    </ligand>
</feature>
<feature type="binding site" evidence="1">
    <location>
        <position position="172"/>
    </location>
    <ligand>
        <name>phosphoenolpyruvate</name>
        <dbReference type="ChEBI" id="CHEBI:58702"/>
    </ligand>
</feature>
<feature type="binding site" evidence="1">
    <location>
        <position position="297"/>
    </location>
    <ligand>
        <name>3-phosphoshikimate</name>
        <dbReference type="ChEBI" id="CHEBI:145989"/>
    </ligand>
</feature>
<feature type="binding site" evidence="1">
    <location>
        <position position="320"/>
    </location>
    <ligand>
        <name>3-phosphoshikimate</name>
        <dbReference type="ChEBI" id="CHEBI:145989"/>
    </ligand>
</feature>
<feature type="binding site" evidence="1">
    <location>
        <position position="324"/>
    </location>
    <ligand>
        <name>3-phosphoshikimate</name>
        <dbReference type="ChEBI" id="CHEBI:145989"/>
    </ligand>
</feature>
<feature type="binding site" evidence="1">
    <location>
        <position position="328"/>
    </location>
    <ligand>
        <name>phosphoenolpyruvate</name>
        <dbReference type="ChEBI" id="CHEBI:58702"/>
    </ligand>
</feature>
<feature type="binding site" evidence="1">
    <location>
        <position position="375"/>
    </location>
    <ligand>
        <name>phosphoenolpyruvate</name>
        <dbReference type="ChEBI" id="CHEBI:58702"/>
    </ligand>
</feature>
<feature type="binding site" evidence="1">
    <location>
        <position position="400"/>
    </location>
    <ligand>
        <name>phosphoenolpyruvate</name>
        <dbReference type="ChEBI" id="CHEBI:58702"/>
    </ligand>
</feature>
<gene>
    <name evidence="1" type="primary">aroA</name>
    <name type="ordered locus">Rleg2_0533</name>
</gene>
<name>AROA_RHILW</name>
<reference key="1">
    <citation type="journal article" date="2010" name="Stand. Genomic Sci.">
        <title>Complete genome sequence of Rhizobium leguminosarum bv trifolii strain WSM2304, an effective microsymbiont of the South American clover Trifolium polymorphum.</title>
        <authorList>
            <person name="Reeve W."/>
            <person name="O'Hara G."/>
            <person name="Chain P."/>
            <person name="Ardley J."/>
            <person name="Brau L."/>
            <person name="Nandesena K."/>
            <person name="Tiwari R."/>
            <person name="Malfatti S."/>
            <person name="Kiss H."/>
            <person name="Lapidus A."/>
            <person name="Copeland A."/>
            <person name="Nolan M."/>
            <person name="Land M."/>
            <person name="Ivanova N."/>
            <person name="Mavromatis K."/>
            <person name="Markowitz V."/>
            <person name="Kyrpides N."/>
            <person name="Melino V."/>
            <person name="Denton M."/>
            <person name="Yates R."/>
            <person name="Howieson J."/>
        </authorList>
    </citation>
    <scope>NUCLEOTIDE SEQUENCE [LARGE SCALE GENOMIC DNA]</scope>
    <source>
        <strain>WSM2304</strain>
    </source>
</reference>
<protein>
    <recommendedName>
        <fullName evidence="1">3-phosphoshikimate 1-carboxyvinyltransferase</fullName>
        <ecNumber evidence="1">2.5.1.19</ecNumber>
    </recommendedName>
    <alternativeName>
        <fullName evidence="1">5-enolpyruvylshikimate-3-phosphate synthase</fullName>
        <shortName evidence="1">EPSP synthase</shortName>
        <shortName evidence="1">EPSPS</shortName>
    </alternativeName>
</protein>
<dbReference type="EC" id="2.5.1.19" evidence="1"/>
<dbReference type="EMBL" id="CP001191">
    <property type="protein sequence ID" value="ACI53830.1"/>
    <property type="molecule type" value="Genomic_DNA"/>
</dbReference>
<dbReference type="RefSeq" id="WP_012556758.1">
    <property type="nucleotide sequence ID" value="NC_011369.1"/>
</dbReference>
<dbReference type="SMR" id="B5ZS37"/>
<dbReference type="STRING" id="395492.Rleg2_0533"/>
<dbReference type="KEGG" id="rlt:Rleg2_0533"/>
<dbReference type="eggNOG" id="COG0128">
    <property type="taxonomic scope" value="Bacteria"/>
</dbReference>
<dbReference type="HOGENOM" id="CLU_024321_0_0_5"/>
<dbReference type="UniPathway" id="UPA00053">
    <property type="reaction ID" value="UER00089"/>
</dbReference>
<dbReference type="Proteomes" id="UP000008330">
    <property type="component" value="Chromosome"/>
</dbReference>
<dbReference type="GO" id="GO:0005737">
    <property type="term" value="C:cytoplasm"/>
    <property type="evidence" value="ECO:0007669"/>
    <property type="project" value="UniProtKB-SubCell"/>
</dbReference>
<dbReference type="GO" id="GO:0003866">
    <property type="term" value="F:3-phosphoshikimate 1-carboxyvinyltransferase activity"/>
    <property type="evidence" value="ECO:0007669"/>
    <property type="project" value="UniProtKB-UniRule"/>
</dbReference>
<dbReference type="GO" id="GO:0008652">
    <property type="term" value="P:amino acid biosynthetic process"/>
    <property type="evidence" value="ECO:0007669"/>
    <property type="project" value="UniProtKB-KW"/>
</dbReference>
<dbReference type="GO" id="GO:0009073">
    <property type="term" value="P:aromatic amino acid family biosynthetic process"/>
    <property type="evidence" value="ECO:0007669"/>
    <property type="project" value="UniProtKB-KW"/>
</dbReference>
<dbReference type="GO" id="GO:0009423">
    <property type="term" value="P:chorismate biosynthetic process"/>
    <property type="evidence" value="ECO:0007669"/>
    <property type="project" value="UniProtKB-UniRule"/>
</dbReference>
<dbReference type="CDD" id="cd01556">
    <property type="entry name" value="EPSP_synthase"/>
    <property type="match status" value="1"/>
</dbReference>
<dbReference type="Gene3D" id="3.65.10.10">
    <property type="entry name" value="Enolpyruvate transferase domain"/>
    <property type="match status" value="2"/>
</dbReference>
<dbReference type="HAMAP" id="MF_00210">
    <property type="entry name" value="EPSP_synth"/>
    <property type="match status" value="1"/>
</dbReference>
<dbReference type="InterPro" id="IPR001986">
    <property type="entry name" value="Enolpyruvate_Tfrase_dom"/>
</dbReference>
<dbReference type="InterPro" id="IPR036968">
    <property type="entry name" value="Enolpyruvate_Tfrase_sf"/>
</dbReference>
<dbReference type="InterPro" id="IPR006264">
    <property type="entry name" value="EPSP_synthase"/>
</dbReference>
<dbReference type="InterPro" id="IPR023193">
    <property type="entry name" value="EPSP_synthase_CS"/>
</dbReference>
<dbReference type="InterPro" id="IPR013792">
    <property type="entry name" value="RNA3'P_cycl/enolpyr_Trfase_a/b"/>
</dbReference>
<dbReference type="NCBIfam" id="TIGR01356">
    <property type="entry name" value="aroA"/>
    <property type="match status" value="1"/>
</dbReference>
<dbReference type="PANTHER" id="PTHR21090">
    <property type="entry name" value="AROM/DEHYDROQUINATE SYNTHASE"/>
    <property type="match status" value="1"/>
</dbReference>
<dbReference type="PANTHER" id="PTHR21090:SF5">
    <property type="entry name" value="PENTAFUNCTIONAL AROM POLYPEPTIDE"/>
    <property type="match status" value="1"/>
</dbReference>
<dbReference type="Pfam" id="PF00275">
    <property type="entry name" value="EPSP_synthase"/>
    <property type="match status" value="2"/>
</dbReference>
<dbReference type="PIRSF" id="PIRSF000505">
    <property type="entry name" value="EPSPS"/>
    <property type="match status" value="1"/>
</dbReference>
<dbReference type="SUPFAM" id="SSF55205">
    <property type="entry name" value="EPT/RTPC-like"/>
    <property type="match status" value="1"/>
</dbReference>
<dbReference type="PROSITE" id="PS00104">
    <property type="entry name" value="EPSP_SYNTHASE_1"/>
    <property type="match status" value="1"/>
</dbReference>
<proteinExistence type="inferred from homology"/>
<accession>B5ZS37</accession>
<keyword id="KW-0028">Amino-acid biosynthesis</keyword>
<keyword id="KW-0057">Aromatic amino acid biosynthesis</keyword>
<keyword id="KW-0963">Cytoplasm</keyword>
<keyword id="KW-1185">Reference proteome</keyword>
<keyword id="KW-0808">Transferase</keyword>
<comment type="function">
    <text evidence="1">Catalyzes the transfer of the enolpyruvyl moiety of phosphoenolpyruvate (PEP) to the 5-hydroxyl of shikimate-3-phosphate (S3P) to produce enolpyruvyl shikimate-3-phosphate and inorganic phosphate.</text>
</comment>
<comment type="catalytic activity">
    <reaction evidence="1">
        <text>3-phosphoshikimate + phosphoenolpyruvate = 5-O-(1-carboxyvinyl)-3-phosphoshikimate + phosphate</text>
        <dbReference type="Rhea" id="RHEA:21256"/>
        <dbReference type="ChEBI" id="CHEBI:43474"/>
        <dbReference type="ChEBI" id="CHEBI:57701"/>
        <dbReference type="ChEBI" id="CHEBI:58702"/>
        <dbReference type="ChEBI" id="CHEBI:145989"/>
        <dbReference type="EC" id="2.5.1.19"/>
    </reaction>
    <physiologicalReaction direction="left-to-right" evidence="1">
        <dbReference type="Rhea" id="RHEA:21257"/>
    </physiologicalReaction>
</comment>
<comment type="pathway">
    <text evidence="1">Metabolic intermediate biosynthesis; chorismate biosynthesis; chorismate from D-erythrose 4-phosphate and phosphoenolpyruvate: step 6/7.</text>
</comment>
<comment type="subunit">
    <text evidence="1">Monomer.</text>
</comment>
<comment type="subcellular location">
    <subcellularLocation>
        <location evidence="1">Cytoplasm</location>
    </subcellularLocation>
</comment>
<comment type="similarity">
    <text evidence="1">Belongs to the EPSP synthase family.</text>
</comment>
<organism>
    <name type="scientific">Rhizobium leguminosarum bv. trifolii (strain WSM2304)</name>
    <dbReference type="NCBI Taxonomy" id="395492"/>
    <lineage>
        <taxon>Bacteria</taxon>
        <taxon>Pseudomonadati</taxon>
        <taxon>Pseudomonadota</taxon>
        <taxon>Alphaproteobacteria</taxon>
        <taxon>Hyphomicrobiales</taxon>
        <taxon>Rhizobiaceae</taxon>
        <taxon>Rhizobium/Agrobacterium group</taxon>
        <taxon>Rhizobium</taxon>
    </lineage>
</organism>
<sequence>MTRTAKLTIIPPGKPLSGRAMPPGSKSITNRALLLAGLAKGTSRLTGALKSDDTRYMADALRAMGVSIDEPDDTTFVVTGSGRLQPPKAPLFLGNAGTATRFLTAAAALVDGTVVVDGDEHMRKRPIGPLVEAMRTLGIDVTAETGCPPVTVKGTGRFQADRIRIDGGLSSQYVSALLMMAAGGDRPFDIELVGEDIGALGYIDLTTAAMKAFGAKVEKTSPVTWRVEPTGYRAADFIVEPDASAATYLWAAEVLTGGAIDLGVPSDAFSQPDARAYDMIARFPQLPAEIDGSQMQDAVPTLAVLAAFNETPVRFVGIANLRVKECDRIRALSSGLNRIRPGLAREEGDDLIVKSDPALVGKRLPAEIDSFADHRIAMSFALAGLKIDGITILDPDCVGKTFPAYWRTLAALGVTYQDKD</sequence>
<evidence type="ECO:0000255" key="1">
    <source>
        <dbReference type="HAMAP-Rule" id="MF_00210"/>
    </source>
</evidence>